<feature type="chain" id="PRO_0000133276" description="Protein E4">
    <location>
        <begin position="1"/>
        <end position="88"/>
    </location>
</feature>
<feature type="region of interest" description="Disordered" evidence="2">
    <location>
        <begin position="21"/>
        <end position="59"/>
    </location>
</feature>
<proteinExistence type="inferred from homology"/>
<protein>
    <recommendedName>
        <fullName>Protein E4</fullName>
    </recommendedName>
</protein>
<keyword id="KW-0244">Early protein</keyword>
<keyword id="KW-1035">Host cytoplasm</keyword>
<keyword id="KW-1079">Host G2/M cell cycle arrest by virus</keyword>
<keyword id="KW-1048">Host nucleus</keyword>
<keyword id="KW-0945">Host-virus interaction</keyword>
<keyword id="KW-1121">Modulation of host cell cycle by virus</keyword>
<keyword id="KW-0597">Phosphoprotein</keyword>
<reference key="1">
    <citation type="journal article" date="1991" name="J. Virol.">
        <title>Biologic properties and nucleotide sequence analysis of human papillomavirus type 51.</title>
        <authorList>
            <person name="Lungu O."/>
            <person name="Crum C.P."/>
            <person name="Silverstein S.J."/>
        </authorList>
    </citation>
    <scope>NUCLEOTIDE SEQUENCE [GENOMIC DNA]</scope>
</reference>
<sequence length="88" mass="10012">MDCEVPAATRYPLLQLLNNYQTPQRPIPLPPAWAPKKPRHNSENDSDLLSPTPPQSPHCPWTIQTTKYTVEVEALTLEGTKVQLRLRL</sequence>
<evidence type="ECO:0000250" key="1">
    <source>
        <dbReference type="UniProtKB" id="P06922"/>
    </source>
</evidence>
<evidence type="ECO:0000256" key="2">
    <source>
        <dbReference type="SAM" id="MobiDB-lite"/>
    </source>
</evidence>
<evidence type="ECO:0000305" key="3"/>
<organismHost>
    <name type="scientific">Homo sapiens</name>
    <name type="common">Human</name>
    <dbReference type="NCBI Taxonomy" id="9606"/>
</organismHost>
<organism>
    <name type="scientific">Human papillomavirus 51</name>
    <dbReference type="NCBI Taxonomy" id="10595"/>
    <lineage>
        <taxon>Viruses</taxon>
        <taxon>Monodnaviria</taxon>
        <taxon>Shotokuvirae</taxon>
        <taxon>Cossaviricota</taxon>
        <taxon>Papovaviricetes</taxon>
        <taxon>Zurhausenvirales</taxon>
        <taxon>Papillomaviridae</taxon>
        <taxon>Firstpapillomavirinae</taxon>
        <taxon>Alphapapillomavirus</taxon>
        <taxon>Alphapapillomavirus 5</taxon>
    </lineage>
</organism>
<accession>P26548</accession>
<comment type="function">
    <text evidence="1">Contributes to multiple aspects of the viral life cycle including viral genome amplification, suppression of suprabasal cell differentiation and egress of newly formed virions. Induces host cell cycle arrest at the G2 phase by associating with and preventing the nuclear entry of host CDK1/cyclin B1 complexes. Inhibits cellular DNA replication by preventing loading of host replication licensing proteins MCM2 and MCM7 onto chromatin. Within the cytoplasm, associates with host kinase SRPK1, a splicing factor regulator, and inhibits its activity. Therefore, E4 favors expression of late viral transcripts by inhibiting SRPK1-mediated phosphorylation of host serine-arginine (SR) proteins that have critical roles in mRNA metabolism. Late in the infectious cycle, E4 also acts to diminish the integrity of the keratinocyte by disrupting the keratin cytoskeleton and inducing apoptosis through alteration of mitochondrial function to facilitate egress of the newly formed virions.</text>
</comment>
<comment type="subunit">
    <text evidence="1">Assembles into oligomeric complexes. Interacts with host CDK1. Interacts with host SRPK1; this interaction may favor expression of late viral transcripts. Interacts with host cytokeratin components KRT8 and KRT18.</text>
</comment>
<comment type="subcellular location">
    <subcellularLocation>
        <location evidence="1">Host cytoplasm</location>
    </subcellularLocation>
    <subcellularLocation>
        <location evidence="1">Host nucleus</location>
    </subcellularLocation>
</comment>
<comment type="PTM">
    <text evidence="1">Phosphorylated by host ERK. The phosphorylation triggers a structural change that enhances keratin binding and protein stability.</text>
</comment>
<comment type="miscellaneous">
    <text evidence="1">The major E4 form is first synthesized as an E1^E4 fusion protein from spliced E1^E4 transcripts, such that the first few amino acids of the E4 protein are derived from the N terminus of E1.</text>
</comment>
<comment type="similarity">
    <text evidence="3">Belongs to the papillomaviridae E4 protein family.</text>
</comment>
<gene>
    <name type="primary">E4</name>
</gene>
<dbReference type="EMBL" id="M62877">
    <property type="status" value="NOT_ANNOTATED_CDS"/>
    <property type="molecule type" value="Genomic_DNA"/>
</dbReference>
<dbReference type="PIR" id="C40415">
    <property type="entry name" value="W4WL51"/>
</dbReference>
<dbReference type="SMR" id="P26548"/>
<dbReference type="Proteomes" id="UP000009125">
    <property type="component" value="Segment"/>
</dbReference>
<dbReference type="GO" id="GO:0030430">
    <property type="term" value="C:host cell cytoplasm"/>
    <property type="evidence" value="ECO:0007669"/>
    <property type="project" value="UniProtKB-SubCell"/>
</dbReference>
<dbReference type="GO" id="GO:0042025">
    <property type="term" value="C:host cell nucleus"/>
    <property type="evidence" value="ECO:0007669"/>
    <property type="project" value="UniProtKB-SubCell"/>
</dbReference>
<dbReference type="GO" id="GO:0039592">
    <property type="term" value="P:symbiont-mediated arrest of host cell cycle during G2/M transition"/>
    <property type="evidence" value="ECO:0007669"/>
    <property type="project" value="UniProtKB-KW"/>
</dbReference>
<dbReference type="InterPro" id="IPR003861">
    <property type="entry name" value="Papilloma_E4"/>
</dbReference>
<dbReference type="Pfam" id="PF02711">
    <property type="entry name" value="Pap_E4"/>
    <property type="match status" value="1"/>
</dbReference>
<name>VE4_HPV51</name>